<name>TGL_BACLD</name>
<keyword id="KW-0012">Acyltransferase</keyword>
<keyword id="KW-1185">Reference proteome</keyword>
<keyword id="KW-0749">Sporulation</keyword>
<keyword id="KW-0808">Transferase</keyword>
<sequence>MISVSGYRLRPEDIEKLNVSQTQRDIANRMLAMPSGYRYGSISELLFELRFREHTVKSARELINSGAKFATFSKTYGNEEFWRVTPEGALELKYRAPASKAIRNIFESGPSYAFECATAIVIIFYMALLKTIGDQTFDRNYQRIILYDWHYERLPIYTDKGNDYLPGDCLYFKNPEFDPSRPQWRGENAILLENNLYAAHGLGILSGETIIEKLNGLRKPHAQTSAYLLSQVTRVDIPALIQMIR</sequence>
<organism>
    <name type="scientific">Bacillus licheniformis (strain ATCC 14580 / DSM 13 / JCM 2505 / CCUG 7422 / NBRC 12200 / NCIMB 9375 / NCTC 10341 / NRRL NRS-1264 / Gibson 46)</name>
    <dbReference type="NCBI Taxonomy" id="279010"/>
    <lineage>
        <taxon>Bacteria</taxon>
        <taxon>Bacillati</taxon>
        <taxon>Bacillota</taxon>
        <taxon>Bacilli</taxon>
        <taxon>Bacillales</taxon>
        <taxon>Bacillaceae</taxon>
        <taxon>Bacillus</taxon>
    </lineage>
</organism>
<protein>
    <recommendedName>
        <fullName evidence="1">Protein-glutamine gamma-glutamyltransferase</fullName>
        <ecNumber evidence="1">2.3.2.13</ecNumber>
    </recommendedName>
    <alternativeName>
        <fullName evidence="1">Transglutaminase</fullName>
        <shortName evidence="1">TGase</shortName>
    </alternativeName>
</protein>
<gene>
    <name evidence="1" type="primary">tgl</name>
    <name type="ordered locus">BLi03298</name>
    <name type="ordered locus">BL02523</name>
</gene>
<proteinExistence type="inferred from homology"/>
<accession>Q65FN2</accession>
<accession>Q62R42</accession>
<comment type="function">
    <text evidence="1">Probably plays a role in the assembly of the spore coat proteins by catalyzing epsilon-(gamma-glutamyl)lysine cross-links.</text>
</comment>
<comment type="catalytic activity">
    <reaction evidence="1">
        <text>L-glutaminyl-[protein] + L-lysyl-[protein] = [protein]-L-lysyl-N(6)-5-L-glutamyl-[protein] + NH4(+)</text>
        <dbReference type="Rhea" id="RHEA:54816"/>
        <dbReference type="Rhea" id="RHEA-COMP:9752"/>
        <dbReference type="Rhea" id="RHEA-COMP:10207"/>
        <dbReference type="Rhea" id="RHEA-COMP:14005"/>
        <dbReference type="ChEBI" id="CHEBI:28938"/>
        <dbReference type="ChEBI" id="CHEBI:29969"/>
        <dbReference type="ChEBI" id="CHEBI:30011"/>
        <dbReference type="ChEBI" id="CHEBI:138370"/>
        <dbReference type="EC" id="2.3.2.13"/>
    </reaction>
</comment>
<comment type="similarity">
    <text evidence="1">Belongs to the bacillus TGase family.</text>
</comment>
<evidence type="ECO:0000255" key="1">
    <source>
        <dbReference type="HAMAP-Rule" id="MF_00727"/>
    </source>
</evidence>
<reference key="1">
    <citation type="journal article" date="2004" name="J. Mol. Microbiol. Biotechnol.">
        <title>The complete genome sequence of Bacillus licheniformis DSM13, an organism with great industrial potential.</title>
        <authorList>
            <person name="Veith B."/>
            <person name="Herzberg C."/>
            <person name="Steckel S."/>
            <person name="Feesche J."/>
            <person name="Maurer K.H."/>
            <person name="Ehrenreich P."/>
            <person name="Baeumer S."/>
            <person name="Henne A."/>
            <person name="Liesegang H."/>
            <person name="Merkl R."/>
            <person name="Ehrenreich A."/>
            <person name="Gottschalk G."/>
        </authorList>
    </citation>
    <scope>NUCLEOTIDE SEQUENCE [LARGE SCALE GENOMIC DNA]</scope>
    <source>
        <strain>ATCC 14580 / DSM 13 / JCM 2505 / CCUG 7422 / NBRC 12200 / NCIMB 9375 / NCTC 10341 / NRRL NRS-1264 / Gibson 46</strain>
    </source>
</reference>
<reference key="2">
    <citation type="journal article" date="2004" name="Genome Biol.">
        <title>Complete genome sequence of the industrial bacterium Bacillus licheniformis and comparisons with closely related Bacillus species.</title>
        <authorList>
            <person name="Rey M.W."/>
            <person name="Ramaiya P."/>
            <person name="Nelson B.A."/>
            <person name="Brody-Karpin S.D."/>
            <person name="Zaretsky E.J."/>
            <person name="Tang M."/>
            <person name="Lopez de Leon A."/>
            <person name="Xiang H."/>
            <person name="Gusti V."/>
            <person name="Clausen I.G."/>
            <person name="Olsen P.B."/>
            <person name="Rasmussen M.D."/>
            <person name="Andersen J.T."/>
            <person name="Joergensen P.L."/>
            <person name="Larsen T.S."/>
            <person name="Sorokin A."/>
            <person name="Bolotin A."/>
            <person name="Lapidus A."/>
            <person name="Galleron N."/>
            <person name="Ehrlich S.D."/>
            <person name="Berka R.M."/>
        </authorList>
    </citation>
    <scope>NUCLEOTIDE SEQUENCE [LARGE SCALE GENOMIC DNA]</scope>
    <source>
        <strain>ATCC 14580 / DSM 13 / JCM 2505 / CCUG 7422 / NBRC 12200 / NCIMB 9375 / NCTC 10341 / NRRL NRS-1264 / Gibson 46</strain>
    </source>
</reference>
<dbReference type="EC" id="2.3.2.13" evidence="1"/>
<dbReference type="EMBL" id="CP000002">
    <property type="protein sequence ID" value="AAU24768.1"/>
    <property type="molecule type" value="Genomic_DNA"/>
</dbReference>
<dbReference type="EMBL" id="AE017333">
    <property type="protein sequence ID" value="AAU42132.1"/>
    <property type="molecule type" value="Genomic_DNA"/>
</dbReference>
<dbReference type="RefSeq" id="WP_009329469.1">
    <property type="nucleotide sequence ID" value="NC_006322.1"/>
</dbReference>
<dbReference type="SMR" id="Q65FN2"/>
<dbReference type="STRING" id="279010.BL02523"/>
<dbReference type="KEGG" id="bld:BLi03298"/>
<dbReference type="KEGG" id="bli:BL02523"/>
<dbReference type="PATRIC" id="fig|279010.13.peg.3347"/>
<dbReference type="eggNOG" id="ENOG502Z8C5">
    <property type="taxonomic scope" value="Bacteria"/>
</dbReference>
<dbReference type="HOGENOM" id="CLU_088922_0_0_9"/>
<dbReference type="Proteomes" id="UP000000606">
    <property type="component" value="Chromosome"/>
</dbReference>
<dbReference type="GO" id="GO:0003810">
    <property type="term" value="F:protein-glutamine gamma-glutamyltransferase activity"/>
    <property type="evidence" value="ECO:0007669"/>
    <property type="project" value="UniProtKB-UniRule"/>
</dbReference>
<dbReference type="GO" id="GO:0030435">
    <property type="term" value="P:sporulation resulting in formation of a cellular spore"/>
    <property type="evidence" value="ECO:0007669"/>
    <property type="project" value="UniProtKB-UniRule"/>
</dbReference>
<dbReference type="HAMAP" id="MF_00727">
    <property type="entry name" value="Tgl"/>
    <property type="match status" value="1"/>
</dbReference>
<dbReference type="InterPro" id="IPR020916">
    <property type="entry name" value="Gln_gamma-glutamylTfrase_bac"/>
</dbReference>
<dbReference type="NCBIfam" id="NF002869">
    <property type="entry name" value="PRK03187.1"/>
    <property type="match status" value="1"/>
</dbReference>
<dbReference type="Pfam" id="PF20085">
    <property type="entry name" value="TGL"/>
    <property type="match status" value="1"/>
</dbReference>
<feature type="chain" id="PRO_1000197969" description="Protein-glutamine gamma-glutamyltransferase">
    <location>
        <begin position="1"/>
        <end position="245"/>
    </location>
</feature>